<feature type="chain" id="PRO_0000331571" description="Sodium/myo-inositol cotransporter 2">
    <location>
        <begin position="1"/>
        <end position="674"/>
    </location>
</feature>
<feature type="topological domain" description="Extracellular" evidence="3">
    <location>
        <begin position="1"/>
        <end position="27"/>
    </location>
</feature>
<feature type="transmembrane region" description="Helical" evidence="3">
    <location>
        <begin position="28"/>
        <end position="48"/>
    </location>
</feature>
<feature type="topological domain" description="Cytoplasmic" evidence="3">
    <location>
        <begin position="49"/>
        <end position="56"/>
    </location>
</feature>
<feature type="transmembrane region" description="Helical" evidence="3">
    <location>
        <begin position="57"/>
        <end position="77"/>
    </location>
</feature>
<feature type="topological domain" description="Extracellular" evidence="3">
    <location>
        <begin position="78"/>
        <end position="102"/>
    </location>
</feature>
<feature type="transmembrane region" description="Helical" evidence="3">
    <location>
        <begin position="103"/>
        <end position="123"/>
    </location>
</feature>
<feature type="topological domain" description="Cytoplasmic" evidence="3">
    <location>
        <begin position="124"/>
        <end position="140"/>
    </location>
</feature>
<feature type="transmembrane region" description="Helical" evidence="3">
    <location>
        <begin position="141"/>
        <end position="161"/>
    </location>
</feature>
<feature type="topological domain" description="Extracellular" evidence="3">
    <location>
        <begin position="162"/>
        <end position="180"/>
    </location>
</feature>
<feature type="transmembrane region" description="Helical" evidence="3">
    <location>
        <begin position="181"/>
        <end position="201"/>
    </location>
</feature>
<feature type="topological domain" description="Cytoplasmic" evidence="3">
    <location>
        <begin position="202"/>
        <end position="208"/>
    </location>
</feature>
<feature type="transmembrane region" description="Helical" evidence="3">
    <location>
        <begin position="209"/>
        <end position="229"/>
    </location>
</feature>
<feature type="topological domain" description="Extracellular" evidence="3">
    <location>
        <begin position="230"/>
        <end position="272"/>
    </location>
</feature>
<feature type="transmembrane region" description="Helical" evidence="3">
    <location>
        <begin position="273"/>
        <end position="293"/>
    </location>
</feature>
<feature type="topological domain" description="Cytoplasmic" evidence="3">
    <location>
        <begin position="294"/>
        <end position="308"/>
    </location>
</feature>
<feature type="transmembrane region" description="Helical" evidence="3">
    <location>
        <begin position="309"/>
        <end position="329"/>
    </location>
</feature>
<feature type="topological domain" description="Extracellular" evidence="3">
    <location>
        <begin position="330"/>
        <end position="375"/>
    </location>
</feature>
<feature type="transmembrane region" description="Helical" evidence="3">
    <location>
        <begin position="376"/>
        <end position="396"/>
    </location>
</feature>
<feature type="topological domain" description="Cytoplasmic" evidence="3">
    <location>
        <begin position="397"/>
        <end position="418"/>
    </location>
</feature>
<feature type="transmembrane region" description="Helical" evidence="3">
    <location>
        <begin position="419"/>
        <end position="439"/>
    </location>
</feature>
<feature type="topological domain" description="Extracellular" evidence="3">
    <location>
        <begin position="440"/>
        <end position="446"/>
    </location>
</feature>
<feature type="transmembrane region" description="Helical" evidence="3">
    <location>
        <begin position="447"/>
        <end position="467"/>
    </location>
</feature>
<feature type="topological domain" description="Cytoplasmic" evidence="3">
    <location>
        <begin position="468"/>
        <end position="479"/>
    </location>
</feature>
<feature type="transmembrane region" description="Helical" evidence="3">
    <location>
        <begin position="480"/>
        <end position="500"/>
    </location>
</feature>
<feature type="topological domain" description="Extracellular" evidence="3">
    <location>
        <begin position="501"/>
        <end position="521"/>
    </location>
</feature>
<feature type="transmembrane region" description="Helical" evidence="3">
    <location>
        <begin position="522"/>
        <end position="542"/>
    </location>
</feature>
<feature type="topological domain" description="Cytoplasmic" evidence="3">
    <location>
        <begin position="543"/>
        <end position="653"/>
    </location>
</feature>
<feature type="transmembrane region" description="Helical" evidence="3">
    <location>
        <begin position="654"/>
        <end position="674"/>
    </location>
</feature>
<feature type="sequence conflict" description="In Ref. 1; BAA03753." evidence="12" ref="1">
    <original>A</original>
    <variation>T</variation>
    <location>
        <position position="164"/>
    </location>
</feature>
<dbReference type="EMBL" id="D16226">
    <property type="protein sequence ID" value="BAA03753.1"/>
    <property type="molecule type" value="mRNA"/>
</dbReference>
<dbReference type="EMBL" id="AF506029">
    <property type="protein sequence ID" value="AAP30856.1"/>
    <property type="molecule type" value="mRNA"/>
</dbReference>
<dbReference type="RefSeq" id="NP_001075662.1">
    <property type="nucleotide sequence ID" value="NM_001082193.2"/>
</dbReference>
<dbReference type="RefSeq" id="XP_008256041.1">
    <property type="nucleotide sequence ID" value="XM_008257819.4"/>
</dbReference>
<dbReference type="RefSeq" id="XP_017197921.1">
    <property type="nucleotide sequence ID" value="XM_017342432.1"/>
</dbReference>
<dbReference type="RefSeq" id="XP_051703340.1">
    <property type="nucleotide sequence ID" value="XM_051847380.2"/>
</dbReference>
<dbReference type="RefSeq" id="XP_051703341.1">
    <property type="nucleotide sequence ID" value="XM_051847381.2"/>
</dbReference>
<dbReference type="RefSeq" id="XP_051703342.1">
    <property type="nucleotide sequence ID" value="XM_051847382.2"/>
</dbReference>
<dbReference type="RefSeq" id="XP_069919824.1">
    <property type="nucleotide sequence ID" value="XM_070063723.1"/>
</dbReference>
<dbReference type="SMR" id="Q28728"/>
<dbReference type="FunCoup" id="Q28728">
    <property type="interactions" value="42"/>
</dbReference>
<dbReference type="STRING" id="9986.ENSOCUP00000005983"/>
<dbReference type="PaxDb" id="9986-ENSOCUP00000005983"/>
<dbReference type="GeneID" id="100008981"/>
<dbReference type="KEGG" id="ocu:100008981"/>
<dbReference type="CTD" id="115584"/>
<dbReference type="eggNOG" id="KOG2349">
    <property type="taxonomic scope" value="Eukaryota"/>
</dbReference>
<dbReference type="HOGENOM" id="CLU_018808_9_2_1"/>
<dbReference type="InParanoid" id="Q28728"/>
<dbReference type="OMA" id="NWVFVAK"/>
<dbReference type="OrthoDB" id="6132759at2759"/>
<dbReference type="TreeFam" id="TF352855"/>
<dbReference type="Proteomes" id="UP000001811">
    <property type="component" value="Unplaced"/>
</dbReference>
<dbReference type="GO" id="GO:0016324">
    <property type="term" value="C:apical plasma membrane"/>
    <property type="evidence" value="ECO:0007669"/>
    <property type="project" value="UniProtKB-SubCell"/>
</dbReference>
<dbReference type="GO" id="GO:0005886">
    <property type="term" value="C:plasma membrane"/>
    <property type="evidence" value="ECO:0000250"/>
    <property type="project" value="UniProtKB"/>
</dbReference>
<dbReference type="GO" id="GO:0005412">
    <property type="term" value="F:D-glucose:sodium symporter activity"/>
    <property type="evidence" value="ECO:0007669"/>
    <property type="project" value="TreeGrafter"/>
</dbReference>
<dbReference type="GO" id="GO:0005365">
    <property type="term" value="F:myo-inositol transmembrane transporter activity"/>
    <property type="evidence" value="ECO:0000250"/>
    <property type="project" value="UniProtKB"/>
</dbReference>
<dbReference type="GO" id="GO:0006915">
    <property type="term" value="P:apoptotic process"/>
    <property type="evidence" value="ECO:0007669"/>
    <property type="project" value="UniProtKB-KW"/>
</dbReference>
<dbReference type="GO" id="GO:0015798">
    <property type="term" value="P:myo-inositol transport"/>
    <property type="evidence" value="ECO:0000250"/>
    <property type="project" value="UniProtKB"/>
</dbReference>
<dbReference type="FunFam" id="1.20.1730.10:FF:000012">
    <property type="entry name" value="sodium/myo-inositol cotransporter 2 isoform X1"/>
    <property type="match status" value="1"/>
</dbReference>
<dbReference type="Gene3D" id="1.20.1730.10">
    <property type="entry name" value="Sodium/glucose cotransporter"/>
    <property type="match status" value="1"/>
</dbReference>
<dbReference type="InterPro" id="IPR038377">
    <property type="entry name" value="Na/Glc_symporter_sf"/>
</dbReference>
<dbReference type="InterPro" id="IPR001734">
    <property type="entry name" value="Na/solute_symporter"/>
</dbReference>
<dbReference type="NCBIfam" id="TIGR00813">
    <property type="entry name" value="sss"/>
    <property type="match status" value="1"/>
</dbReference>
<dbReference type="PANTHER" id="PTHR11819:SF171">
    <property type="entry name" value="SODIUM_MYO-INOSITOL COTRANSPORTER 2"/>
    <property type="match status" value="1"/>
</dbReference>
<dbReference type="PANTHER" id="PTHR11819">
    <property type="entry name" value="SOLUTE CARRIER FAMILY 5"/>
    <property type="match status" value="1"/>
</dbReference>
<dbReference type="Pfam" id="PF00474">
    <property type="entry name" value="SSF"/>
    <property type="match status" value="1"/>
</dbReference>
<dbReference type="PROSITE" id="PS50283">
    <property type="entry name" value="NA_SOLUT_SYMP_3"/>
    <property type="match status" value="1"/>
</dbReference>
<proteinExistence type="evidence at protein level"/>
<gene>
    <name evidence="1" type="primary">SLC5A11</name>
    <name evidence="10" type="synonym">KST1</name>
    <name evidence="10 11" type="synonym">SMIT2</name>
</gene>
<sequence length="674" mass="73599">MESSTSSPQPPLSDPLDPFPQRSLEPGDIAVLVLYFLFVLAVGLWSTVKTKRDTVKGYFLAGGDMVWWPVGASLFASNVGSGHFVGLAGSGAATGISVAAYEFNGMFSVLMLAWIFLPIYIAGQVTTMPEYLRRRFGGSRIAITLAVLYLFIYIFTKISVDMYAGAIFIQQSLHLDLYLSVVGLLAVTALYTVAGGLAAVIYTDALQTLIMLVGALTLMGYSFAAVGGMEGLQEKYFLALPSNRSENSSCGLPREDAFHLFRDPLTSDLPWPGILFGMSIPSLWYWCTDQVIVQRSLAAKNLSHAKGGSLMAAYLKVLPLFIMVFPGMVSRILFPDQVACADPETCQRVCNNPSGCSDIAYPKLVLELLPTGLRGLMMAVMVAALMSSLTSIFNSASTIFTMDLWNHVRPRASEKELMIVGRVFVLLLVLVSVLWIPVVQASQGGQLFVYIQAISSYLQPPVAMVFVLGCFWKRANEKGAFWGLVLGLLLGFIRLILDFIYVEPACHQPDERPSVVKNVHYLYFSMILSSVTVLTVTVMSLLTEPPSKEMISHLTWFTRRDPVVQKAQVPAATPLPPALSHNGTAEANSASIQLETIQEGASKAHSSDVTPKQSRVVRALLWLCGMEGKSTEQAPRPAEPVLASIEENPVVKTLLDVNCLLCICCAFFLWGYFA</sequence>
<name>SC5AB_RABIT</name>
<evidence type="ECO:0000250" key="1">
    <source>
        <dbReference type="UniProtKB" id="Q8WWX8"/>
    </source>
</evidence>
<evidence type="ECO:0000250" key="2">
    <source>
        <dbReference type="UniProtKB" id="Q9Z1F2"/>
    </source>
</evidence>
<evidence type="ECO:0000255" key="3"/>
<evidence type="ECO:0000269" key="4">
    <source>
    </source>
</evidence>
<evidence type="ECO:0000269" key="5">
    <source>
    </source>
</evidence>
<evidence type="ECO:0000269" key="6">
    <source>
    </source>
</evidence>
<evidence type="ECO:0000269" key="7">
    <source>
    </source>
</evidence>
<evidence type="ECO:0000269" key="8">
    <source>
    </source>
</evidence>
<evidence type="ECO:0000269" key="9">
    <source>
    </source>
</evidence>
<evidence type="ECO:0000303" key="10">
    <source>
    </source>
</evidence>
<evidence type="ECO:0000303" key="11">
    <source>
    </source>
</evidence>
<evidence type="ECO:0000305" key="12"/>
<evidence type="ECO:0000312" key="13">
    <source>
        <dbReference type="EMBL" id="AAP30856.1"/>
    </source>
</evidence>
<evidence type="ECO:0000312" key="14">
    <source>
        <dbReference type="EMBL" id="BAA03753.1"/>
    </source>
</evidence>
<organism>
    <name type="scientific">Oryctolagus cuniculus</name>
    <name type="common">Rabbit</name>
    <dbReference type="NCBI Taxonomy" id="9986"/>
    <lineage>
        <taxon>Eukaryota</taxon>
        <taxon>Metazoa</taxon>
        <taxon>Chordata</taxon>
        <taxon>Craniata</taxon>
        <taxon>Vertebrata</taxon>
        <taxon>Euteleostomi</taxon>
        <taxon>Mammalia</taxon>
        <taxon>Eutheria</taxon>
        <taxon>Euarchontoglires</taxon>
        <taxon>Glires</taxon>
        <taxon>Lagomorpha</taxon>
        <taxon>Leporidae</taxon>
        <taxon>Oryctolagus</taxon>
    </lineage>
</organism>
<comment type="function">
    <text evidence="1 4 5 6 7 8">Involved in the sodium-dependent cotransport of myo-inositol (MI) with a Na(+):MI stoichiometry of 2:1. Exclusively responsible for apical MI transport and absorption in intestine. Can also transport D-chiro-inositol (DCI) but not L-fucose (PubMed:12133831, PubMed:15181167, PubMed:15613375, PubMed:17932225). Exhibits stereospecific cotransport of both D-glucose and D-xylose (PubMed:12133831). May induce apoptosis through the TNF-alpha, PDCD1 pathway (By similarity). May play a role in the regulation of MI concentration in serum, involving reabsorption in at least the proximal tubule of the kidney (PubMed:17306760).</text>
</comment>
<comment type="catalytic activity">
    <reaction evidence="4 5">
        <text>myo-inositol(out) + 2 Na(+)(out) = myo-inositol(in) + 2 Na(+)(in)</text>
        <dbReference type="Rhea" id="RHEA:72987"/>
        <dbReference type="ChEBI" id="CHEBI:17268"/>
        <dbReference type="ChEBI" id="CHEBI:29101"/>
    </reaction>
</comment>
<comment type="catalytic activity">
    <reaction evidence="4 5">
        <text>1D-chiro-inositol(out) + 2 Na(+)(out) = 1D-chiro-inositol(in) + 2 Na(+)(in)</text>
        <dbReference type="Rhea" id="RHEA:73315"/>
        <dbReference type="ChEBI" id="CHEBI:27372"/>
        <dbReference type="ChEBI" id="CHEBI:29101"/>
    </reaction>
</comment>
<comment type="catalytic activity">
    <reaction evidence="4">
        <text>D-glucose(out) + 2 Na(+)(out) = D-glucose(in) + 2 Na(+)(in)</text>
        <dbReference type="Rhea" id="RHEA:70495"/>
        <dbReference type="ChEBI" id="CHEBI:4167"/>
        <dbReference type="ChEBI" id="CHEBI:29101"/>
    </reaction>
</comment>
<comment type="catalytic activity">
    <reaction evidence="4">
        <text>D-xylose(out) + 2 Na(+)(out) = D-xylose(in) + 2 Na(+)(in)</text>
        <dbReference type="Rhea" id="RHEA:73367"/>
        <dbReference type="ChEBI" id="CHEBI:29101"/>
        <dbReference type="ChEBI" id="CHEBI:53455"/>
    </reaction>
</comment>
<comment type="activity regulation">
    <text evidence="4 5 7">MI transport activity stimulated five-fold under 24 hour hypertonic shock conditions. MI inward currents were gradually inhibited as increasing amounts of phlorizin were added to the superfusion medium. When sodium is replaced by potassium, MI uptake is dramatically reduced and in the presence of L-fucose or D-chiro-inositol (DCI), the specific accumulation of tracer amounts of MI is also reduced.</text>
</comment>
<comment type="biophysicochemical properties">
    <kinetics>
        <KM evidence="4 5">120 uM for myoinositol (in Xenopus laevis oocytes)</KM>
        <KM evidence="4 5">334 uM for myoinositol (in dog MDCK cells)</KM>
        <KM evidence="4">13 mM for Na(+) (in Xenopus laevis oocytes)</KM>
        <KM evidence="4 5">130 uM for D-chiro-inositol</KM>
        <KM evidence="4 5">30 mM for D-glucose</KM>
    </kinetics>
</comment>
<comment type="subcellular location">
    <subcellularLocation>
        <location evidence="4 5 7">Membrane</location>
        <topology evidence="4 5 7">Multi-pass membrane protein</topology>
    </subcellularLocation>
    <subcellularLocation>
        <location evidence="2">Apical cell membrane</location>
        <topology evidence="2">Multi-pass membrane protein</topology>
    </subcellularLocation>
    <text evidence="4 5 7">Located on membrane of kidney brush border membrane vesicles (BBMVs) and apical membrane of proximal convoluted tubules.</text>
</comment>
<comment type="tissue specificity">
    <text evidence="5 7 8 9">Expressed in brain, lung and kidney. In the kidney, strongly expressed in the cortex, at the luminal side of proximal convoluted tubules and in BBMVs. Weaker expression observed in the medulla (at protein level).</text>
</comment>
<comment type="similarity">
    <text evidence="3">Belongs to the sodium:solute symporter (SSF) (TC 2.A.21) family.</text>
</comment>
<keyword id="KW-0053">Apoptosis</keyword>
<keyword id="KW-1003">Cell membrane</keyword>
<keyword id="KW-0406">Ion transport</keyword>
<keyword id="KW-0472">Membrane</keyword>
<keyword id="KW-1185">Reference proteome</keyword>
<keyword id="KW-0915">Sodium</keyword>
<keyword id="KW-0739">Sodium transport</keyword>
<keyword id="KW-0762">Sugar transport</keyword>
<keyword id="KW-0769">Symport</keyword>
<keyword id="KW-0812">Transmembrane</keyword>
<keyword id="KW-1133">Transmembrane helix</keyword>
<keyword id="KW-0813">Transport</keyword>
<reference evidence="12 14" key="1">
    <citation type="journal article" date="1994" name="Biochim. Biophys. Acta">
        <title>cDNA sequence for rkST1, a novel member of the sodium ion-dependent glucose cotransporter family.</title>
        <authorList>
            <person name="Hitomi K."/>
            <person name="Tsukagoshi N."/>
        </authorList>
    </citation>
    <scope>NUCLEOTIDE SEQUENCE [MRNA]</scope>
    <scope>TISSUE SPECIFICITY</scope>
    <source>
        <tissue evidence="14">Kidney</tissue>
    </source>
</reference>
<reference evidence="12 13" key="2">
    <citation type="journal article" date="2002" name="J. Biol. Chem.">
        <title>Identification of a novel Na+/myo-inositol cotransporter.</title>
        <authorList>
            <person name="Coady M.J."/>
            <person name="Wallendorff B."/>
            <person name="Gagnon D.G."/>
            <person name="Lapointe J.-Y."/>
        </authorList>
    </citation>
    <scope>NUCLEOTIDE SEQUENCE [MRNA]</scope>
    <scope>FUNCTION</scope>
    <scope>BIOPHYSICOCHEMICAL PROPERTIES</scope>
    <scope>SUBCELLULAR LOCATION</scope>
    <scope>INHIBITION</scope>
    <scope>TRANSPORTER ACTIVITY</scope>
    <source>
        <tissue evidence="13">Kidney cortex</tissue>
    </source>
</reference>
<reference evidence="12" key="3">
    <citation type="journal article" date="2004" name="J. Physiol. (Lond.)">
        <title>Expression of the sodium-myo-inositol cotransporter SMIT2 at the apical membrane of Madin-Darby canine kidney cells.</title>
        <authorList>
            <person name="Bissonnette P."/>
            <person name="Coady M.J."/>
            <person name="Lapointe J.-Y."/>
        </authorList>
    </citation>
    <scope>FUNCTION</scope>
    <scope>ACTIVITY REGULATION</scope>
    <scope>BIOPHYSICOCHEMICAL PROPERTIES</scope>
    <scope>SUBCELLULAR LOCATION</scope>
    <scope>TISSUE SPECIFICITY</scope>
    <scope>TRANSPORTER ACTIVITY</scope>
</reference>
<reference evidence="12" key="4">
    <citation type="journal article" date="2005" name="J. Physiol. (Lond.)">
        <title>Determination of transport stoichiometry for two cation-coupled myo-inositol cotransporters: SMIT2 and HMIT.</title>
        <authorList>
            <person name="Bourgeois F."/>
            <person name="Coady M.J."/>
            <person name="Lapointe J.-Y."/>
        </authorList>
    </citation>
    <scope>FUNCTION</scope>
</reference>
<reference evidence="12" key="5">
    <citation type="journal article" date="2007" name="Am. J. Physiol.">
        <title>SMIT2 mediates all myo-inositol uptake in apical membranes of rat small intestine.</title>
        <authorList>
            <person name="Aouameur R."/>
            <person name="Da Cal S."/>
            <person name="Bissonnette P."/>
            <person name="Coady M.J."/>
            <person name="Lapointe J.-Y."/>
        </authorList>
    </citation>
    <scope>FUNCTION</scope>
    <scope>TISSUE SPECIFICITY</scope>
</reference>
<reference evidence="12" key="6">
    <citation type="journal article" date="2007" name="Biochim. Biophys. Acta">
        <title>Expression and functionality of the Na+/myo-inositol cotransporter SMIT2 in rabbit kidney.</title>
        <authorList>
            <person name="Lahjouji K."/>
            <person name="Aouameur R."/>
            <person name="Bissonnette P."/>
            <person name="Coady M.J."/>
            <person name="Bichet D.G."/>
            <person name="Lapointe J.-Y."/>
        </authorList>
    </citation>
    <scope>FUNCTION</scope>
    <scope>ACTIVITY REGULATION</scope>
    <scope>SUBCELLULAR LOCATION</scope>
    <scope>TISSUE SPECIFICITY</scope>
</reference>
<protein>
    <recommendedName>
        <fullName evidence="12">Sodium/myo-inositol cotransporter 2</fullName>
        <shortName>Na(+)/myo-inositol cotransporter 2</shortName>
    </recommendedName>
    <alternativeName>
        <fullName>Sodium-dependent glucose cotransporter</fullName>
    </alternativeName>
    <alternativeName>
        <fullName>Sodium/glucose cotransporter KST1</fullName>
        <shortName evidence="10 11">rKST1</shortName>
    </alternativeName>
    <alternativeName>
        <fullName>Sodium/myo-inositol transporter 2</fullName>
        <shortName evidence="10">SMIT2</shortName>
    </alternativeName>
    <alternativeName>
        <fullName>Solute carrier family 5 member 11</fullName>
    </alternativeName>
</protein>
<accession>Q28728</accession>
<accession>Q863B5</accession>